<accession>A4YNQ7</accession>
<reference key="1">
    <citation type="journal article" date="2007" name="Science">
        <title>Legumes symbioses: absence of nod genes in photosynthetic bradyrhizobia.</title>
        <authorList>
            <person name="Giraud E."/>
            <person name="Moulin L."/>
            <person name="Vallenet D."/>
            <person name="Barbe V."/>
            <person name="Cytryn E."/>
            <person name="Avarre J.-C."/>
            <person name="Jaubert M."/>
            <person name="Simon D."/>
            <person name="Cartieaux F."/>
            <person name="Prin Y."/>
            <person name="Bena G."/>
            <person name="Hannibal L."/>
            <person name="Fardoux J."/>
            <person name="Kojadinovic M."/>
            <person name="Vuillet L."/>
            <person name="Lajus A."/>
            <person name="Cruveiller S."/>
            <person name="Rouy Z."/>
            <person name="Mangenot S."/>
            <person name="Segurens B."/>
            <person name="Dossat C."/>
            <person name="Franck W.L."/>
            <person name="Chang W.-S."/>
            <person name="Saunders E."/>
            <person name="Bruce D."/>
            <person name="Richardson P."/>
            <person name="Normand P."/>
            <person name="Dreyfus B."/>
            <person name="Pignol D."/>
            <person name="Stacey G."/>
            <person name="Emerich D."/>
            <person name="Vermeglio A."/>
            <person name="Medigue C."/>
            <person name="Sadowsky M."/>
        </authorList>
    </citation>
    <scope>NUCLEOTIDE SEQUENCE [LARGE SCALE GENOMIC DNA]</scope>
    <source>
        <strain>ORS 278</strain>
    </source>
</reference>
<proteinExistence type="inferred from homology"/>
<protein>
    <recommendedName>
        <fullName evidence="1">Fructose-1,6-bisphosphatase class 1</fullName>
        <shortName evidence="1">FBPase class 1</shortName>
        <ecNumber evidence="1">3.1.3.11</ecNumber>
    </recommendedName>
    <alternativeName>
        <fullName evidence="1">D-fructose-1,6-bisphosphate 1-phosphohydrolase class 1</fullName>
    </alternativeName>
</protein>
<dbReference type="EC" id="3.1.3.11" evidence="1"/>
<dbReference type="EMBL" id="CU234118">
    <property type="protein sequence ID" value="CAL75533.1"/>
    <property type="molecule type" value="Genomic_DNA"/>
</dbReference>
<dbReference type="RefSeq" id="WP_011924761.1">
    <property type="nucleotide sequence ID" value="NC_009445.1"/>
</dbReference>
<dbReference type="SMR" id="A4YNQ7"/>
<dbReference type="STRING" id="114615.BRADO1655"/>
<dbReference type="KEGG" id="bra:BRADO1655"/>
<dbReference type="eggNOG" id="COG0158">
    <property type="taxonomic scope" value="Bacteria"/>
</dbReference>
<dbReference type="HOGENOM" id="CLU_039977_0_0_5"/>
<dbReference type="UniPathway" id="UPA00116"/>
<dbReference type="Proteomes" id="UP000001994">
    <property type="component" value="Chromosome"/>
</dbReference>
<dbReference type="GO" id="GO:0005829">
    <property type="term" value="C:cytosol"/>
    <property type="evidence" value="ECO:0007669"/>
    <property type="project" value="TreeGrafter"/>
</dbReference>
<dbReference type="GO" id="GO:0042132">
    <property type="term" value="F:fructose 1,6-bisphosphate 1-phosphatase activity"/>
    <property type="evidence" value="ECO:0007669"/>
    <property type="project" value="UniProtKB-UniRule"/>
</dbReference>
<dbReference type="GO" id="GO:0000287">
    <property type="term" value="F:magnesium ion binding"/>
    <property type="evidence" value="ECO:0007669"/>
    <property type="project" value="UniProtKB-UniRule"/>
</dbReference>
<dbReference type="GO" id="GO:0030388">
    <property type="term" value="P:fructose 1,6-bisphosphate metabolic process"/>
    <property type="evidence" value="ECO:0007669"/>
    <property type="project" value="TreeGrafter"/>
</dbReference>
<dbReference type="GO" id="GO:0006002">
    <property type="term" value="P:fructose 6-phosphate metabolic process"/>
    <property type="evidence" value="ECO:0007669"/>
    <property type="project" value="TreeGrafter"/>
</dbReference>
<dbReference type="GO" id="GO:0006000">
    <property type="term" value="P:fructose metabolic process"/>
    <property type="evidence" value="ECO:0007669"/>
    <property type="project" value="TreeGrafter"/>
</dbReference>
<dbReference type="GO" id="GO:0006094">
    <property type="term" value="P:gluconeogenesis"/>
    <property type="evidence" value="ECO:0007669"/>
    <property type="project" value="UniProtKB-UniRule"/>
</dbReference>
<dbReference type="GO" id="GO:0019253">
    <property type="term" value="P:reductive pentose-phosphate cycle"/>
    <property type="evidence" value="ECO:0007669"/>
    <property type="project" value="UniProtKB-UniRule"/>
</dbReference>
<dbReference type="GO" id="GO:0005986">
    <property type="term" value="P:sucrose biosynthetic process"/>
    <property type="evidence" value="ECO:0007669"/>
    <property type="project" value="TreeGrafter"/>
</dbReference>
<dbReference type="CDD" id="cd00354">
    <property type="entry name" value="FBPase"/>
    <property type="match status" value="1"/>
</dbReference>
<dbReference type="FunFam" id="3.40.190.80:FF:000011">
    <property type="entry name" value="Fructose-1,6-bisphosphatase class 1"/>
    <property type="match status" value="1"/>
</dbReference>
<dbReference type="Gene3D" id="3.40.190.80">
    <property type="match status" value="1"/>
</dbReference>
<dbReference type="Gene3D" id="3.30.540.10">
    <property type="entry name" value="Fructose-1,6-Bisphosphatase, subunit A, domain 1"/>
    <property type="match status" value="1"/>
</dbReference>
<dbReference type="HAMAP" id="MF_01855">
    <property type="entry name" value="FBPase_class1"/>
    <property type="match status" value="1"/>
</dbReference>
<dbReference type="InterPro" id="IPR044015">
    <property type="entry name" value="FBPase_C_dom"/>
</dbReference>
<dbReference type="InterPro" id="IPR000146">
    <property type="entry name" value="FBPase_class-1"/>
</dbReference>
<dbReference type="InterPro" id="IPR033391">
    <property type="entry name" value="FBPase_N"/>
</dbReference>
<dbReference type="InterPro" id="IPR028343">
    <property type="entry name" value="FBPtase"/>
</dbReference>
<dbReference type="InterPro" id="IPR020548">
    <property type="entry name" value="Fructose_bisphosphatase_AS"/>
</dbReference>
<dbReference type="NCBIfam" id="NF006780">
    <property type="entry name" value="PRK09293.1-4"/>
    <property type="match status" value="1"/>
</dbReference>
<dbReference type="PANTHER" id="PTHR11556">
    <property type="entry name" value="FRUCTOSE-1,6-BISPHOSPHATASE-RELATED"/>
    <property type="match status" value="1"/>
</dbReference>
<dbReference type="PANTHER" id="PTHR11556:SF35">
    <property type="entry name" value="SEDOHEPTULOSE-1,7-BISPHOSPHATASE, CHLOROPLASTIC"/>
    <property type="match status" value="1"/>
</dbReference>
<dbReference type="Pfam" id="PF00316">
    <property type="entry name" value="FBPase"/>
    <property type="match status" value="1"/>
</dbReference>
<dbReference type="Pfam" id="PF18913">
    <property type="entry name" value="FBPase_C"/>
    <property type="match status" value="1"/>
</dbReference>
<dbReference type="PIRSF" id="PIRSF500210">
    <property type="entry name" value="FBPtase"/>
    <property type="match status" value="1"/>
</dbReference>
<dbReference type="PIRSF" id="PIRSF000904">
    <property type="entry name" value="FBPtase_SBPase"/>
    <property type="match status" value="1"/>
</dbReference>
<dbReference type="PRINTS" id="PR00115">
    <property type="entry name" value="F16BPHPHTASE"/>
</dbReference>
<dbReference type="SUPFAM" id="SSF56655">
    <property type="entry name" value="Carbohydrate phosphatase"/>
    <property type="match status" value="1"/>
</dbReference>
<dbReference type="PROSITE" id="PS00124">
    <property type="entry name" value="FBPASE"/>
    <property type="match status" value="1"/>
</dbReference>
<organism>
    <name type="scientific">Bradyrhizobium sp. (strain ORS 278)</name>
    <dbReference type="NCBI Taxonomy" id="114615"/>
    <lineage>
        <taxon>Bacteria</taxon>
        <taxon>Pseudomonadati</taxon>
        <taxon>Pseudomonadota</taxon>
        <taxon>Alphaproteobacteria</taxon>
        <taxon>Hyphomicrobiales</taxon>
        <taxon>Nitrobacteraceae</taxon>
        <taxon>Bradyrhizobium</taxon>
    </lineage>
</organism>
<feature type="chain" id="PRO_0000364475" description="Fructose-1,6-bisphosphatase class 1">
    <location>
        <begin position="1"/>
        <end position="356"/>
    </location>
</feature>
<feature type="region of interest" description="Disordered" evidence="2">
    <location>
        <begin position="1"/>
        <end position="26"/>
    </location>
</feature>
<feature type="binding site" evidence="1">
    <location>
        <position position="101"/>
    </location>
    <ligand>
        <name>Mg(2+)</name>
        <dbReference type="ChEBI" id="CHEBI:18420"/>
        <label>1</label>
    </ligand>
</feature>
<feature type="binding site" evidence="1">
    <location>
        <position position="120"/>
    </location>
    <ligand>
        <name>Mg(2+)</name>
        <dbReference type="ChEBI" id="CHEBI:18420"/>
        <label>1</label>
    </ligand>
</feature>
<feature type="binding site" evidence="1">
    <location>
        <position position="120"/>
    </location>
    <ligand>
        <name>Mg(2+)</name>
        <dbReference type="ChEBI" id="CHEBI:18420"/>
        <label>2</label>
    </ligand>
</feature>
<feature type="binding site" evidence="1">
    <location>
        <position position="122"/>
    </location>
    <ligand>
        <name>Mg(2+)</name>
        <dbReference type="ChEBI" id="CHEBI:18420"/>
        <label>1</label>
    </ligand>
</feature>
<feature type="binding site" evidence="1">
    <location>
        <begin position="123"/>
        <end position="126"/>
    </location>
    <ligand>
        <name>substrate</name>
    </ligand>
</feature>
<feature type="binding site" evidence="1">
    <location>
        <position position="123"/>
    </location>
    <ligand>
        <name>Mg(2+)</name>
        <dbReference type="ChEBI" id="CHEBI:18420"/>
        <label>2</label>
    </ligand>
</feature>
<feature type="binding site" evidence="1">
    <location>
        <position position="211"/>
    </location>
    <ligand>
        <name>substrate</name>
    </ligand>
</feature>
<feature type="binding site" evidence="1">
    <location>
        <position position="283"/>
    </location>
    <ligand>
        <name>Mg(2+)</name>
        <dbReference type="ChEBI" id="CHEBI:18420"/>
        <label>2</label>
    </ligand>
</feature>
<evidence type="ECO:0000255" key="1">
    <source>
        <dbReference type="HAMAP-Rule" id="MF_01855"/>
    </source>
</evidence>
<evidence type="ECO:0000256" key="2">
    <source>
        <dbReference type="SAM" id="MobiDB-lite"/>
    </source>
</evidence>
<sequence length="356" mass="39010">MAREWPMTHPSNHPMDHHHQTLQAHLASQGADADCAAVIEALADAARELARQIAIAPLSGIDEGAATVNTDGDIQKALDIVADNLMREALRRAPVAGILSEEGDRPETVNEAAPLCVAIDPLDGSSNLQNNISVGTIFSIRPRGRDVLSSFFEPGTAQRAAGFFVYGPQTCLVLAIDRRVDLYVLHPTLHEFILAKSGIRIPQDTPEFAINASNRRHWSGAVRNYVDECLSGAAGPRGRDFNMRWIASLVAEAYRILMRGGVFLYPADSRPGYREGRLRLVYEAHPMALIMEWAGGSASSGRARILELSARSPHQRAPLIMGDVRLVRDVDMLHEGVEPLFETSDAPLFARRGLFR</sequence>
<name>F16PA_BRASO</name>
<keyword id="KW-0113">Calvin cycle</keyword>
<keyword id="KW-0119">Carbohydrate metabolism</keyword>
<keyword id="KW-0963">Cytoplasm</keyword>
<keyword id="KW-0378">Hydrolase</keyword>
<keyword id="KW-0460">Magnesium</keyword>
<keyword id="KW-0479">Metal-binding</keyword>
<keyword id="KW-1185">Reference proteome</keyword>
<gene>
    <name evidence="1" type="primary">fbp</name>
    <name type="ordered locus">BRADO1655</name>
</gene>
<comment type="catalytic activity">
    <reaction evidence="1">
        <text>beta-D-fructose 1,6-bisphosphate + H2O = beta-D-fructose 6-phosphate + phosphate</text>
        <dbReference type="Rhea" id="RHEA:11064"/>
        <dbReference type="ChEBI" id="CHEBI:15377"/>
        <dbReference type="ChEBI" id="CHEBI:32966"/>
        <dbReference type="ChEBI" id="CHEBI:43474"/>
        <dbReference type="ChEBI" id="CHEBI:57634"/>
        <dbReference type="EC" id="3.1.3.11"/>
    </reaction>
</comment>
<comment type="cofactor">
    <cofactor evidence="1">
        <name>Mg(2+)</name>
        <dbReference type="ChEBI" id="CHEBI:18420"/>
    </cofactor>
    <text evidence="1">Binds 2 magnesium ions per subunit.</text>
</comment>
<comment type="pathway">
    <text evidence="1">Carbohydrate biosynthesis; Calvin cycle.</text>
</comment>
<comment type="subunit">
    <text evidence="1">Homotetramer.</text>
</comment>
<comment type="subcellular location">
    <subcellularLocation>
        <location evidence="1">Cytoplasm</location>
    </subcellularLocation>
</comment>
<comment type="similarity">
    <text evidence="1">Belongs to the FBPase class 1 family.</text>
</comment>